<protein>
    <recommendedName>
        <fullName>Uncharacterized transporter YBR287W</fullName>
    </recommendedName>
</protein>
<dbReference type="EMBL" id="X76053">
    <property type="protein sequence ID" value="CAA53650.1"/>
    <property type="molecule type" value="Genomic_DNA"/>
</dbReference>
<dbReference type="EMBL" id="Z36156">
    <property type="protein sequence ID" value="CAA85252.1"/>
    <property type="molecule type" value="Genomic_DNA"/>
</dbReference>
<dbReference type="EMBL" id="AY692590">
    <property type="protein sequence ID" value="AAT92609.1"/>
    <property type="molecule type" value="Genomic_DNA"/>
</dbReference>
<dbReference type="EMBL" id="BK006936">
    <property type="protein sequence ID" value="DAA07402.1"/>
    <property type="molecule type" value="Genomic_DNA"/>
</dbReference>
<dbReference type="PIR" id="S44549">
    <property type="entry name" value="S44549"/>
</dbReference>
<dbReference type="RefSeq" id="NP_009846.1">
    <property type="nucleotide sequence ID" value="NM_001178635.1"/>
</dbReference>
<dbReference type="BioGRID" id="32981">
    <property type="interactions" value="78"/>
</dbReference>
<dbReference type="DIP" id="DIP-6660N"/>
<dbReference type="FunCoup" id="P38355">
    <property type="interactions" value="396"/>
</dbReference>
<dbReference type="IntAct" id="P38355">
    <property type="interactions" value="6"/>
</dbReference>
<dbReference type="MINT" id="P38355"/>
<dbReference type="STRING" id="4932.YBR287W"/>
<dbReference type="TCDB" id="2.A.69.2.2">
    <property type="family name" value="the auxin efflux carrier (aec) family"/>
</dbReference>
<dbReference type="CarbonylDB" id="P38355"/>
<dbReference type="iPTMnet" id="P38355"/>
<dbReference type="PaxDb" id="4932-YBR287W"/>
<dbReference type="PeptideAtlas" id="P38355"/>
<dbReference type="EnsemblFungi" id="YBR287W_mRNA">
    <property type="protein sequence ID" value="YBR287W"/>
    <property type="gene ID" value="YBR287W"/>
</dbReference>
<dbReference type="GeneID" id="852590"/>
<dbReference type="KEGG" id="sce:YBR287W"/>
<dbReference type="AGR" id="SGD:S000000491"/>
<dbReference type="SGD" id="S000000491">
    <property type="gene designation" value="YBR287W"/>
</dbReference>
<dbReference type="VEuPathDB" id="FungiDB:YBR287W"/>
<dbReference type="eggNOG" id="KOG2722">
    <property type="taxonomic scope" value="Eukaryota"/>
</dbReference>
<dbReference type="HOGENOM" id="CLU_026460_2_0_1"/>
<dbReference type="InParanoid" id="P38355"/>
<dbReference type="OMA" id="IFVVQTF"/>
<dbReference type="OrthoDB" id="2499604at2759"/>
<dbReference type="BioCyc" id="YEAST:G3O-29206-MONOMER"/>
<dbReference type="BioGRID-ORCS" id="852590">
    <property type="hits" value="0 hits in 10 CRISPR screens"/>
</dbReference>
<dbReference type="PRO" id="PR:P38355"/>
<dbReference type="Proteomes" id="UP000002311">
    <property type="component" value="Chromosome II"/>
</dbReference>
<dbReference type="RNAct" id="P38355">
    <property type="molecule type" value="protein"/>
</dbReference>
<dbReference type="GO" id="GO:0005783">
    <property type="term" value="C:endoplasmic reticulum"/>
    <property type="evidence" value="ECO:0007005"/>
    <property type="project" value="SGD"/>
</dbReference>
<dbReference type="GO" id="GO:0016020">
    <property type="term" value="C:membrane"/>
    <property type="evidence" value="ECO:0007669"/>
    <property type="project" value="UniProtKB-SubCell"/>
</dbReference>
<dbReference type="GO" id="GO:0055085">
    <property type="term" value="P:transmembrane transport"/>
    <property type="evidence" value="ECO:0007669"/>
    <property type="project" value="InterPro"/>
</dbReference>
<dbReference type="InterPro" id="IPR004776">
    <property type="entry name" value="Mem_transp_PIN-like"/>
</dbReference>
<dbReference type="PANTHER" id="PTHR31794">
    <property type="entry name" value="AUXIN EFFLUX TRANSPORTER FAMILY PROTEIN (EUROFUNG)"/>
    <property type="match status" value="1"/>
</dbReference>
<dbReference type="PANTHER" id="PTHR31794:SF2">
    <property type="entry name" value="AUXIN EFFLUX TRANSPORTER FAMILY PROTEIN (EUROFUNG)"/>
    <property type="match status" value="1"/>
</dbReference>
<dbReference type="Pfam" id="PF03547">
    <property type="entry name" value="Mem_trans"/>
    <property type="match status" value="1"/>
</dbReference>
<evidence type="ECO:0000255" key="1"/>
<evidence type="ECO:0000269" key="2">
    <source>
    </source>
</evidence>
<evidence type="ECO:0000305" key="3"/>
<evidence type="ECO:0007744" key="4">
    <source>
    </source>
</evidence>
<evidence type="ECO:0007744" key="5">
    <source>
    </source>
</evidence>
<feature type="chain" id="PRO_0000123805" description="Uncharacterized transporter YBR287W">
    <location>
        <begin position="1"/>
        <end position="427"/>
    </location>
</feature>
<feature type="transmembrane region" description="Helical" evidence="1">
    <location>
        <begin position="10"/>
        <end position="30"/>
    </location>
</feature>
<feature type="transmembrane region" description="Helical" evidence="1">
    <location>
        <begin position="43"/>
        <end position="63"/>
    </location>
</feature>
<feature type="transmembrane region" description="Helical" evidence="1">
    <location>
        <begin position="71"/>
        <end position="91"/>
    </location>
</feature>
<feature type="transmembrane region" description="Helical" evidence="1">
    <location>
        <begin position="253"/>
        <end position="273"/>
    </location>
</feature>
<feature type="transmembrane region" description="Helical" evidence="1">
    <location>
        <begin position="288"/>
        <end position="308"/>
    </location>
</feature>
<feature type="transmembrane region" description="Helical" evidence="1">
    <location>
        <begin position="327"/>
        <end position="347"/>
    </location>
</feature>
<feature type="transmembrane region" description="Helical" evidence="1">
    <location>
        <begin position="358"/>
        <end position="378"/>
    </location>
</feature>
<feature type="transmembrane region" description="Helical" evidence="1">
    <location>
        <begin position="397"/>
        <end position="417"/>
    </location>
</feature>
<feature type="modified residue" description="Phosphothreonine" evidence="4">
    <location>
        <position position="199"/>
    </location>
</feature>
<feature type="modified residue" description="Phosphoserine" evidence="5">
    <location>
        <position position="234"/>
    </location>
</feature>
<feature type="sequence conflict" description="In Ref. 4; AAT92609." evidence="3" ref="4">
    <original>N</original>
    <variation>K</variation>
    <location>
        <position position="425"/>
    </location>
</feature>
<proteinExistence type="evidence at protein level"/>
<reference key="1">
    <citation type="journal article" date="1994" name="Yeast">
        <title>The sequence of a 32,420 bp segment located on the right arm of chromosome II from Saccharomyces cerevisiae.</title>
        <authorList>
            <person name="Holmstroem K."/>
            <person name="Brandt T."/>
            <person name="Kallesoe T."/>
        </authorList>
    </citation>
    <scope>NUCLEOTIDE SEQUENCE [GENOMIC DNA]</scope>
    <source>
        <strain>ATCC 204508 / S288c</strain>
    </source>
</reference>
<reference key="2">
    <citation type="journal article" date="1994" name="EMBO J.">
        <title>Complete DNA sequence of yeast chromosome II.</title>
        <authorList>
            <person name="Feldmann H."/>
            <person name="Aigle M."/>
            <person name="Aljinovic G."/>
            <person name="Andre B."/>
            <person name="Baclet M.C."/>
            <person name="Barthe C."/>
            <person name="Baur A."/>
            <person name="Becam A.-M."/>
            <person name="Biteau N."/>
            <person name="Boles E."/>
            <person name="Brandt T."/>
            <person name="Brendel M."/>
            <person name="Brueckner M."/>
            <person name="Bussereau F."/>
            <person name="Christiansen C."/>
            <person name="Contreras R."/>
            <person name="Crouzet M."/>
            <person name="Cziepluch C."/>
            <person name="Demolis N."/>
            <person name="Delaveau T."/>
            <person name="Doignon F."/>
            <person name="Domdey H."/>
            <person name="Duesterhus S."/>
            <person name="Dubois E."/>
            <person name="Dujon B."/>
            <person name="El Bakkoury M."/>
            <person name="Entian K.-D."/>
            <person name="Feuermann M."/>
            <person name="Fiers W."/>
            <person name="Fobo G.M."/>
            <person name="Fritz C."/>
            <person name="Gassenhuber J."/>
            <person name="Glansdorff N."/>
            <person name="Goffeau A."/>
            <person name="Grivell L.A."/>
            <person name="de Haan M."/>
            <person name="Hein C."/>
            <person name="Herbert C.J."/>
            <person name="Hollenberg C.P."/>
            <person name="Holmstroem K."/>
            <person name="Jacq C."/>
            <person name="Jacquet M."/>
            <person name="Jauniaux J.-C."/>
            <person name="Jonniaux J.-L."/>
            <person name="Kallesoee T."/>
            <person name="Kiesau P."/>
            <person name="Kirchrath L."/>
            <person name="Koetter P."/>
            <person name="Korol S."/>
            <person name="Liebl S."/>
            <person name="Logghe M."/>
            <person name="Lohan A.J.E."/>
            <person name="Louis E.J."/>
            <person name="Li Z.Y."/>
            <person name="Maat M.J."/>
            <person name="Mallet L."/>
            <person name="Mannhaupt G."/>
            <person name="Messenguy F."/>
            <person name="Miosga T."/>
            <person name="Molemans F."/>
            <person name="Mueller S."/>
            <person name="Nasr F."/>
            <person name="Obermaier B."/>
            <person name="Perea J."/>
            <person name="Pierard A."/>
            <person name="Piravandi E."/>
            <person name="Pohl F.M."/>
            <person name="Pohl T.M."/>
            <person name="Potier S."/>
            <person name="Proft M."/>
            <person name="Purnelle B."/>
            <person name="Ramezani Rad M."/>
            <person name="Rieger M."/>
            <person name="Rose M."/>
            <person name="Schaaff-Gerstenschlaeger I."/>
            <person name="Scherens B."/>
            <person name="Schwarzlose C."/>
            <person name="Skala J."/>
            <person name="Slonimski P.P."/>
            <person name="Smits P.H.M."/>
            <person name="Souciet J.-L."/>
            <person name="Steensma H.Y."/>
            <person name="Stucka R."/>
            <person name="Urrestarazu L.A."/>
            <person name="van der Aart Q.J.M."/>
            <person name="Van Dyck L."/>
            <person name="Vassarotti A."/>
            <person name="Vetter I."/>
            <person name="Vierendeels F."/>
            <person name="Vissers S."/>
            <person name="Wagner G."/>
            <person name="de Wergifosse P."/>
            <person name="Wolfe K.H."/>
            <person name="Zagulski M."/>
            <person name="Zimmermann F.K."/>
            <person name="Mewes H.-W."/>
            <person name="Kleine K."/>
        </authorList>
    </citation>
    <scope>NUCLEOTIDE SEQUENCE [LARGE SCALE GENOMIC DNA]</scope>
    <source>
        <strain>ATCC 204508 / S288c</strain>
    </source>
</reference>
<reference key="3">
    <citation type="journal article" date="2014" name="G3 (Bethesda)">
        <title>The reference genome sequence of Saccharomyces cerevisiae: Then and now.</title>
        <authorList>
            <person name="Engel S.R."/>
            <person name="Dietrich F.S."/>
            <person name="Fisk D.G."/>
            <person name="Binkley G."/>
            <person name="Balakrishnan R."/>
            <person name="Costanzo M.C."/>
            <person name="Dwight S.S."/>
            <person name="Hitz B.C."/>
            <person name="Karra K."/>
            <person name="Nash R.S."/>
            <person name="Weng S."/>
            <person name="Wong E.D."/>
            <person name="Lloyd P."/>
            <person name="Skrzypek M.S."/>
            <person name="Miyasato S.R."/>
            <person name="Simison M."/>
            <person name="Cherry J.M."/>
        </authorList>
    </citation>
    <scope>GENOME REANNOTATION</scope>
    <source>
        <strain>ATCC 204508 / S288c</strain>
    </source>
</reference>
<reference key="4">
    <citation type="journal article" date="2007" name="Genome Res.">
        <title>Approaching a complete repository of sequence-verified protein-encoding clones for Saccharomyces cerevisiae.</title>
        <authorList>
            <person name="Hu Y."/>
            <person name="Rolfs A."/>
            <person name="Bhullar B."/>
            <person name="Murthy T.V.S."/>
            <person name="Zhu C."/>
            <person name="Berger M.F."/>
            <person name="Camargo A.A."/>
            <person name="Kelley F."/>
            <person name="McCarron S."/>
            <person name="Jepson D."/>
            <person name="Richardson A."/>
            <person name="Raphael J."/>
            <person name="Moreira D."/>
            <person name="Taycher E."/>
            <person name="Zuo D."/>
            <person name="Mohr S."/>
            <person name="Kane M.F."/>
            <person name="Williamson J."/>
            <person name="Simpson A.J.G."/>
            <person name="Bulyk M.L."/>
            <person name="Harlow E."/>
            <person name="Marsischky G."/>
            <person name="Kolodner R.D."/>
            <person name="LaBaer J."/>
        </authorList>
    </citation>
    <scope>NUCLEOTIDE SEQUENCE [GENOMIC DNA]</scope>
    <source>
        <strain>ATCC 204508 / S288c</strain>
    </source>
</reference>
<reference key="5">
    <citation type="journal article" date="2003" name="Nature">
        <title>Global analysis of protein expression in yeast.</title>
        <authorList>
            <person name="Ghaemmaghami S."/>
            <person name="Huh W.-K."/>
            <person name="Bower K."/>
            <person name="Howson R.W."/>
            <person name="Belle A."/>
            <person name="Dephoure N."/>
            <person name="O'Shea E.K."/>
            <person name="Weissman J.S."/>
        </authorList>
    </citation>
    <scope>LEVEL OF PROTEIN EXPRESSION [LARGE SCALE ANALYSIS]</scope>
</reference>
<reference key="6">
    <citation type="journal article" date="2007" name="J. Proteome Res.">
        <title>Large-scale phosphorylation analysis of alpha-factor-arrested Saccharomyces cerevisiae.</title>
        <authorList>
            <person name="Li X."/>
            <person name="Gerber S.A."/>
            <person name="Rudner A.D."/>
            <person name="Beausoleil S.A."/>
            <person name="Haas W."/>
            <person name="Villen J."/>
            <person name="Elias J.E."/>
            <person name="Gygi S.P."/>
        </authorList>
    </citation>
    <scope>IDENTIFICATION BY MASS SPECTROMETRY [LARGE SCALE ANALYSIS]</scope>
    <source>
        <strain>ADR376</strain>
    </source>
</reference>
<reference key="7">
    <citation type="journal article" date="2008" name="Mol. Cell. Proteomics">
        <title>A multidimensional chromatography technology for in-depth phosphoproteome analysis.</title>
        <authorList>
            <person name="Albuquerque C.P."/>
            <person name="Smolka M.B."/>
            <person name="Payne S.H."/>
            <person name="Bafna V."/>
            <person name="Eng J."/>
            <person name="Zhou H."/>
        </authorList>
    </citation>
    <scope>PHOSPHORYLATION [LARGE SCALE ANALYSIS] AT THR-199</scope>
    <scope>IDENTIFICATION BY MASS SPECTROMETRY [LARGE SCALE ANALYSIS]</scope>
</reference>
<reference key="8">
    <citation type="journal article" date="2009" name="Science">
        <title>Global analysis of Cdk1 substrate phosphorylation sites provides insights into evolution.</title>
        <authorList>
            <person name="Holt L.J."/>
            <person name="Tuch B.B."/>
            <person name="Villen J."/>
            <person name="Johnson A.D."/>
            <person name="Gygi S.P."/>
            <person name="Morgan D.O."/>
        </authorList>
    </citation>
    <scope>PHOSPHORYLATION [LARGE SCALE ANALYSIS] AT SER-234</scope>
    <scope>IDENTIFICATION BY MASS SPECTROMETRY [LARGE SCALE ANALYSIS]</scope>
</reference>
<organism>
    <name type="scientific">Saccharomyces cerevisiae (strain ATCC 204508 / S288c)</name>
    <name type="common">Baker's yeast</name>
    <dbReference type="NCBI Taxonomy" id="559292"/>
    <lineage>
        <taxon>Eukaryota</taxon>
        <taxon>Fungi</taxon>
        <taxon>Dikarya</taxon>
        <taxon>Ascomycota</taxon>
        <taxon>Saccharomycotina</taxon>
        <taxon>Saccharomycetes</taxon>
        <taxon>Saccharomycetales</taxon>
        <taxon>Saccharomycetaceae</taxon>
        <taxon>Saccharomyces</taxon>
    </lineage>
</organism>
<comment type="subcellular location">
    <subcellularLocation>
        <location evidence="3">Membrane</location>
        <topology evidence="3">Multi-pass membrane protein</topology>
    </subcellularLocation>
</comment>
<comment type="miscellaneous">
    <text evidence="2">Present with 6440 molecules/cell in log phase SD medium.</text>
</comment>
<comment type="similarity">
    <text evidence="3">Belongs to the auxin efflux carrier (TC 2.A.69) family.</text>
</comment>
<accession>P38355</accession>
<accession>D6VQT2</accession>
<accession>E9P8W6</accession>
<keyword id="KW-0472">Membrane</keyword>
<keyword id="KW-0597">Phosphoprotein</keyword>
<keyword id="KW-1185">Reference proteome</keyword>
<keyword id="KW-0812">Transmembrane</keyword>
<keyword id="KW-1133">Transmembrane helix</keyword>
<keyword id="KW-0813">Transport</keyword>
<gene>
    <name type="ordered locus">YBR287W</name>
    <name type="ORF">YBR2034</name>
</gene>
<name>YB8B_YEAST</name>
<sequence>MVETFSFAHLAYLVFESVLQVVIIALAGFWSASSGLLPKQSQKIISLLNVDLFTPCLIFSKLAKSLSMAKIFEIAIIPIFFGLTTGISFISGKIMSRILDLDKDETNFVVANSVFGNSNSLPVSLTLSLAYTLPNLTWDQIPNDNRDNVASRGILYLLIFQQIGQMLRWSWGYNKLMKWSGENTQHMPPSQVQSLLERTPNIDNEELVNEEQEEQELLEEENNRMNSSFLSSSSIGDKIWQKSCTVFERIRANLNPPLYSMIFAVVVAAIGPLQRELFMEDGFINNTFAEAVTQLGSVSIPLILVVLGSNLYPSAEVFPKTVHHSKLLIGSIIGRMILPSCFLLPIIAIAVKYINVSILDDPIFLVVGFLLTVSPPAIQLTQITQLNEFFEAEMADILFWGYAVLSLPVSIIVVSGAIYVLQWANPT</sequence>